<protein>
    <recommendedName>
        <fullName>Putative cysteine-rich repeat secretory protein 24</fullName>
    </recommendedName>
</protein>
<keyword id="KW-1185">Reference proteome</keyword>
<keyword id="KW-0677">Repeat</keyword>
<keyword id="KW-0964">Secreted</keyword>
<keyword id="KW-0732">Signal</keyword>
<comment type="subcellular location">
    <subcellularLocation>
        <location evidence="3">Secreted</location>
    </subcellularLocation>
</comment>
<comment type="similarity">
    <text evidence="3">Belongs to the cysteine-rich repeat secretory protein family.</text>
</comment>
<evidence type="ECO:0000255" key="1"/>
<evidence type="ECO:0000255" key="2">
    <source>
        <dbReference type="PROSITE-ProRule" id="PRU00806"/>
    </source>
</evidence>
<evidence type="ECO:0000305" key="3"/>
<dbReference type="EMBL" id="AB028622">
    <property type="protein sequence ID" value="BAB01376.1"/>
    <property type="molecule type" value="Genomic_DNA"/>
</dbReference>
<dbReference type="EMBL" id="CP002686">
    <property type="protein sequence ID" value="AEE76571.2"/>
    <property type="molecule type" value="Genomic_DNA"/>
</dbReference>
<dbReference type="RefSeq" id="NP_188834.5">
    <property type="nucleotide sequence ID" value="NM_113092.5"/>
</dbReference>
<dbReference type="SMR" id="Q9LRL4"/>
<dbReference type="STRING" id="3702.Q9LRL4"/>
<dbReference type="iPTMnet" id="Q9LRL4"/>
<dbReference type="PaxDb" id="3702-AT3G21960.2"/>
<dbReference type="ProteomicsDB" id="222650"/>
<dbReference type="EnsemblPlants" id="AT3G21960.1">
    <property type="protein sequence ID" value="AT3G21960.1"/>
    <property type="gene ID" value="AT3G21960"/>
</dbReference>
<dbReference type="GeneID" id="821754"/>
<dbReference type="Gramene" id="AT3G21960.1">
    <property type="protein sequence ID" value="AT3G21960.1"/>
    <property type="gene ID" value="AT3G21960"/>
</dbReference>
<dbReference type="KEGG" id="ath:AT3G21960"/>
<dbReference type="Araport" id="AT3G21960"/>
<dbReference type="TAIR" id="AT3G21960"/>
<dbReference type="eggNOG" id="KOG0496">
    <property type="taxonomic scope" value="Eukaryota"/>
</dbReference>
<dbReference type="InParanoid" id="Q9LRL4"/>
<dbReference type="OMA" id="CPNNKGR"/>
<dbReference type="OrthoDB" id="1087723at2759"/>
<dbReference type="PhylomeDB" id="Q9LRL4"/>
<dbReference type="PRO" id="PR:Q9LRL4"/>
<dbReference type="Proteomes" id="UP000006548">
    <property type="component" value="Chromosome 3"/>
</dbReference>
<dbReference type="ExpressionAtlas" id="Q9LRL4">
    <property type="expression patterns" value="baseline and differential"/>
</dbReference>
<dbReference type="GO" id="GO:0005576">
    <property type="term" value="C:extracellular region"/>
    <property type="evidence" value="ECO:0007669"/>
    <property type="project" value="UniProtKB-SubCell"/>
</dbReference>
<dbReference type="CDD" id="cd23509">
    <property type="entry name" value="Gnk2-like"/>
    <property type="match status" value="2"/>
</dbReference>
<dbReference type="FunFam" id="3.30.430.20:FF:000007">
    <property type="entry name" value="Cysteine-rich receptor-like protein kinase 11"/>
    <property type="match status" value="1"/>
</dbReference>
<dbReference type="Gene3D" id="3.30.430.20">
    <property type="entry name" value="Gnk2 domain, C-X8-C-X2-C motif"/>
    <property type="match status" value="2"/>
</dbReference>
<dbReference type="InterPro" id="IPR050581">
    <property type="entry name" value="CRR_secretory_protein"/>
</dbReference>
<dbReference type="InterPro" id="IPR002902">
    <property type="entry name" value="GNK2"/>
</dbReference>
<dbReference type="InterPro" id="IPR038408">
    <property type="entry name" value="GNK2_sf"/>
</dbReference>
<dbReference type="PANTHER" id="PTHR32411:SF54">
    <property type="entry name" value="CYSTEINE-RICH REPEAT SECRETORY PROTEIN 29-RELATED"/>
    <property type="match status" value="1"/>
</dbReference>
<dbReference type="PANTHER" id="PTHR32411">
    <property type="entry name" value="CYSTEINE-RICH REPEAT SECRETORY PROTEIN 38-RELATED"/>
    <property type="match status" value="1"/>
</dbReference>
<dbReference type="Pfam" id="PF01657">
    <property type="entry name" value="Stress-antifung"/>
    <property type="match status" value="2"/>
</dbReference>
<dbReference type="PROSITE" id="PS51473">
    <property type="entry name" value="GNK2"/>
    <property type="match status" value="2"/>
</dbReference>
<reference key="1">
    <citation type="journal article" date="2000" name="DNA Res.">
        <title>Structural analysis of Arabidopsis thaliana chromosome 3. I. Sequence features of the regions of 4,504,864 bp covered by sixty P1 and TAC clones.</title>
        <authorList>
            <person name="Sato S."/>
            <person name="Nakamura Y."/>
            <person name="Kaneko T."/>
            <person name="Katoh T."/>
            <person name="Asamizu E."/>
            <person name="Tabata S."/>
        </authorList>
    </citation>
    <scope>NUCLEOTIDE SEQUENCE [LARGE SCALE GENOMIC DNA]</scope>
    <source>
        <strain>cv. Columbia</strain>
    </source>
</reference>
<reference key="2">
    <citation type="journal article" date="2017" name="Plant J.">
        <title>Araport11: a complete reannotation of the Arabidopsis thaliana reference genome.</title>
        <authorList>
            <person name="Cheng C.Y."/>
            <person name="Krishnakumar V."/>
            <person name="Chan A.P."/>
            <person name="Thibaud-Nissen F."/>
            <person name="Schobel S."/>
            <person name="Town C.D."/>
        </authorList>
    </citation>
    <scope>GENOME REANNOTATION</scope>
    <source>
        <strain>cv. Columbia</strain>
    </source>
</reference>
<reference key="3">
    <citation type="journal article" date="2001" name="Plant Physiol.">
        <title>A superfamily of proteins with novel cysteine-rich repeats.</title>
        <authorList>
            <person name="Chen Z."/>
        </authorList>
    </citation>
    <scope>GENE FAMILY ORGANIZATION</scope>
    <scope>NOMENCLATURE</scope>
</reference>
<gene>
    <name type="primary">CRRSP24</name>
    <name type="ordered locus">At3g21960</name>
    <name type="ORF">MZN24.11</name>
</gene>
<sequence>MSLSSSVTKHLISASILAIVAMQLPSVHSVLSLNETNAYLHHICINGEGTFKSGSPYEKEIKQLIDFLSSFIKDYSFVHGVSGIGPDDINVKFQCRGDTLQAKCRSCLATAFSEIRSKCPNNKGRIIWYDNCHLDLSSIYTYGQIDYKNNFYMYNAKDVRGDKKSFYKNMKAFLHKLKAKASSKENKPYVKDYMYAAGRESLGTVKLYAMVQCTQDLSLKNCTVCLDWIMTKLPECCNGKQGGRVLSPSCNFRYELYPFVEN</sequence>
<proteinExistence type="inferred from homology"/>
<accession>Q9LRL4</accession>
<accession>F4IYX0</accession>
<feature type="signal peptide" evidence="1">
    <location>
        <begin position="1"/>
        <end position="29"/>
    </location>
</feature>
<feature type="chain" id="PRO_0000296152" description="Putative cysteine-rich repeat secretory protein 24">
    <location>
        <begin position="30"/>
        <end position="262"/>
    </location>
</feature>
<feature type="domain" description="Gnk2-homologous 1" evidence="2">
    <location>
        <begin position="39"/>
        <end position="141"/>
    </location>
</feature>
<feature type="domain" description="Gnk2-homologous 2" evidence="2">
    <location>
        <begin position="147"/>
        <end position="259"/>
    </location>
</feature>
<name>CRR24_ARATH</name>
<organism>
    <name type="scientific">Arabidopsis thaliana</name>
    <name type="common">Mouse-ear cress</name>
    <dbReference type="NCBI Taxonomy" id="3702"/>
    <lineage>
        <taxon>Eukaryota</taxon>
        <taxon>Viridiplantae</taxon>
        <taxon>Streptophyta</taxon>
        <taxon>Embryophyta</taxon>
        <taxon>Tracheophyta</taxon>
        <taxon>Spermatophyta</taxon>
        <taxon>Magnoliopsida</taxon>
        <taxon>eudicotyledons</taxon>
        <taxon>Gunneridae</taxon>
        <taxon>Pentapetalae</taxon>
        <taxon>rosids</taxon>
        <taxon>malvids</taxon>
        <taxon>Brassicales</taxon>
        <taxon>Brassicaceae</taxon>
        <taxon>Camelineae</taxon>
        <taxon>Arabidopsis</taxon>
    </lineage>
</organism>